<protein>
    <recommendedName>
        <fullName>Citrate synthase</fullName>
        <ecNumber>2.3.3.16</ecNumber>
    </recommendedName>
</protein>
<sequence>YIDGDKGILLYRGYPIDQLAEKGDFLESCYLLLYGELPTQQEKNDFDRCIMQHTMVHEQFSRFFHGFRRDSHPMAVMVACLGAMSAFYHDSIDITDPHQRMIASVRLISKVPTLAAMAYKYSIGQAFVYPRNDLSYAANFLRMCFAVPCEEYKINPVLARAMDQIFILHADHEQNASTSTVRLAGSSGANPFACIAAGVACLWGPAHGGANEACLKMLQEIGSIKRIPEFIARAKDKNDPFRLMGFGHRVYKNYDPRAKIMQKTCHEVLKELNIQDDPLLDIAIELEKIALSDEYFIEKKLYPNVDFYSGITLKALGFPTE</sequence>
<dbReference type="EC" id="2.3.3.16"/>
<dbReference type="EMBL" id="Z70009">
    <property type="protein sequence ID" value="CAA93831.1"/>
    <property type="molecule type" value="Genomic_DNA"/>
</dbReference>
<dbReference type="EMBL" id="U28072">
    <property type="protein sequence ID" value="AAA74977.1"/>
    <property type="molecule type" value="Genomic_DNA"/>
</dbReference>
<dbReference type="SMR" id="P51032"/>
<dbReference type="UniPathway" id="UPA00223">
    <property type="reaction ID" value="UER00717"/>
</dbReference>
<dbReference type="GO" id="GO:0005737">
    <property type="term" value="C:cytoplasm"/>
    <property type="evidence" value="ECO:0007669"/>
    <property type="project" value="InterPro"/>
</dbReference>
<dbReference type="GO" id="GO:0004108">
    <property type="term" value="F:citrate (Si)-synthase activity"/>
    <property type="evidence" value="ECO:0007669"/>
    <property type="project" value="InterPro"/>
</dbReference>
<dbReference type="GO" id="GO:0006099">
    <property type="term" value="P:tricarboxylic acid cycle"/>
    <property type="evidence" value="ECO:0007669"/>
    <property type="project" value="UniProtKB-UniPathway"/>
</dbReference>
<dbReference type="FunFam" id="1.10.230.10:FF:000002">
    <property type="entry name" value="Citrate synthase"/>
    <property type="match status" value="1"/>
</dbReference>
<dbReference type="Gene3D" id="1.10.580.10">
    <property type="entry name" value="Citrate Synthase, domain 1"/>
    <property type="match status" value="1"/>
</dbReference>
<dbReference type="Gene3D" id="1.10.230.10">
    <property type="entry name" value="Cytochrome P450-Terp, domain 2"/>
    <property type="match status" value="1"/>
</dbReference>
<dbReference type="InterPro" id="IPR016142">
    <property type="entry name" value="Citrate_synth-like_lrg_a-sub"/>
</dbReference>
<dbReference type="InterPro" id="IPR016143">
    <property type="entry name" value="Citrate_synth-like_sm_a-sub"/>
</dbReference>
<dbReference type="InterPro" id="IPR002020">
    <property type="entry name" value="Citrate_synthase"/>
</dbReference>
<dbReference type="InterPro" id="IPR019810">
    <property type="entry name" value="Citrate_synthase_AS"/>
</dbReference>
<dbReference type="InterPro" id="IPR024176">
    <property type="entry name" value="Citrate_synthase_bac-typ"/>
</dbReference>
<dbReference type="InterPro" id="IPR036969">
    <property type="entry name" value="Citrate_synthase_sf"/>
</dbReference>
<dbReference type="InterPro" id="IPR010953">
    <property type="entry name" value="Citrate_synthase_typ-I"/>
</dbReference>
<dbReference type="NCBIfam" id="TIGR01798">
    <property type="entry name" value="cit_synth_I"/>
    <property type="match status" value="1"/>
</dbReference>
<dbReference type="NCBIfam" id="NF004126">
    <property type="entry name" value="PRK05614.1"/>
    <property type="match status" value="1"/>
</dbReference>
<dbReference type="PANTHER" id="PTHR42871">
    <property type="entry name" value="CITRATE SYNTHASE"/>
    <property type="match status" value="1"/>
</dbReference>
<dbReference type="PANTHER" id="PTHR42871:SF1">
    <property type="entry name" value="CITRATE SYNTHASE"/>
    <property type="match status" value="1"/>
</dbReference>
<dbReference type="Pfam" id="PF00285">
    <property type="entry name" value="Citrate_synt"/>
    <property type="match status" value="1"/>
</dbReference>
<dbReference type="PIRSF" id="PIRSF001369">
    <property type="entry name" value="Citrate_synth"/>
    <property type="match status" value="1"/>
</dbReference>
<dbReference type="PRINTS" id="PR00143">
    <property type="entry name" value="CITRTSNTHASE"/>
</dbReference>
<dbReference type="SUPFAM" id="SSF48256">
    <property type="entry name" value="Citrate synthase"/>
    <property type="match status" value="1"/>
</dbReference>
<dbReference type="PROSITE" id="PS00480">
    <property type="entry name" value="CITRATE_SYNTHASE"/>
    <property type="match status" value="1"/>
</dbReference>
<proteinExistence type="inferred from homology"/>
<accession>P51032</accession>
<reference key="1">
    <citation type="journal article" date="1996" name="Int. J. Syst. Bacteriol.">
        <title>Comparison of partial citrate synthase gene (gltA) sequences for phylogenetic analysis of Bartonella species.</title>
        <authorList>
            <person name="Birtles R.J."/>
            <person name="Raoult D."/>
        </authorList>
    </citation>
    <scope>NUCLEOTIDE SEQUENCE [GENOMIC DNA]</scope>
    <source>
        <strain>ATCC 49927 / DSM 28217 / CCUG 30455 / F9251</strain>
    </source>
</reference>
<reference key="2">
    <citation type="submission" date="1995-05" db="EMBL/GenBank/DDBJ databases">
        <authorList>
            <person name="Jones D.C."/>
            <person name="Regnery R."/>
            <person name="Bowen M."/>
        </authorList>
    </citation>
    <scope>NUCLEOTIDE SEQUENCE [GENOMIC DNA] OF 210-321</scope>
</reference>
<keyword id="KW-0808">Transferase</keyword>
<keyword id="KW-0816">Tricarboxylic acid cycle</keyword>
<comment type="catalytic activity">
    <reaction evidence="1">
        <text>oxaloacetate + acetyl-CoA + H2O = citrate + CoA + H(+)</text>
        <dbReference type="Rhea" id="RHEA:16845"/>
        <dbReference type="ChEBI" id="CHEBI:15377"/>
        <dbReference type="ChEBI" id="CHEBI:15378"/>
        <dbReference type="ChEBI" id="CHEBI:16452"/>
        <dbReference type="ChEBI" id="CHEBI:16947"/>
        <dbReference type="ChEBI" id="CHEBI:57287"/>
        <dbReference type="ChEBI" id="CHEBI:57288"/>
        <dbReference type="EC" id="2.3.3.16"/>
    </reaction>
</comment>
<comment type="pathway">
    <text>Carbohydrate metabolism; tricarboxylic acid cycle; isocitrate from oxaloacetate: step 1/2.</text>
</comment>
<comment type="miscellaneous">
    <text>Citrate synthase is found in nearly all cells capable of oxidative metabolism.</text>
</comment>
<comment type="similarity">
    <text evidence="2">Belongs to the citrate synthase family.</text>
</comment>
<name>CISY_BAREL</name>
<organism>
    <name type="scientific">Bartonella elizabethae</name>
    <name type="common">Rochalimaea elizabethae</name>
    <dbReference type="NCBI Taxonomy" id="807"/>
    <lineage>
        <taxon>Bacteria</taxon>
        <taxon>Pseudomonadati</taxon>
        <taxon>Pseudomonadota</taxon>
        <taxon>Alphaproteobacteria</taxon>
        <taxon>Hyphomicrobiales</taxon>
        <taxon>Bartonellaceae</taxon>
        <taxon>Bartonella</taxon>
    </lineage>
</organism>
<feature type="chain" id="PRO_0000169933" description="Citrate synthase">
    <location>
        <begin position="1" status="less than"/>
        <end position="321" status="greater than"/>
    </location>
</feature>
<feature type="active site" evidence="1">
    <location>
        <position position="248"/>
    </location>
</feature>
<feature type="active site" evidence="1">
    <location>
        <position position="306"/>
    </location>
</feature>
<feature type="non-terminal residue">
    <location>
        <position position="1"/>
    </location>
</feature>
<feature type="non-terminal residue">
    <location>
        <position position="321"/>
    </location>
</feature>
<gene>
    <name type="primary">gltA</name>
</gene>
<evidence type="ECO:0000255" key="1">
    <source>
        <dbReference type="PROSITE-ProRule" id="PRU10117"/>
    </source>
</evidence>
<evidence type="ECO:0000305" key="2"/>